<accession>Q2SKZ0</accession>
<name>MTNC_HAHCH</name>
<feature type="chain" id="PRO_0000357370" description="Enolase-phosphatase E1">
    <location>
        <begin position="1"/>
        <end position="233"/>
    </location>
</feature>
<gene>
    <name evidence="1" type="primary">mtnC</name>
    <name type="ordered locus">HCH_01846</name>
</gene>
<keyword id="KW-0028">Amino-acid biosynthesis</keyword>
<keyword id="KW-0378">Hydrolase</keyword>
<keyword id="KW-0460">Magnesium</keyword>
<keyword id="KW-0479">Metal-binding</keyword>
<keyword id="KW-0486">Methionine biosynthesis</keyword>
<keyword id="KW-1185">Reference proteome</keyword>
<sequence>MAEFNGIRAIVTDIEGTTSSISFVHEVLFPYAAKHMDAFIRENFSAPAVAEQLDEVARLGGVDRKSPDALIKQLLDWIAEDKKITPLKALQGMIWRSGYDEGAYKGHVYPEVAERLRHWRELGIRLFVYSSGSVAAQKQIFGFSEAGDLTPLFSGYFDTRVGGKRDADSYRAIVREVSEPASSVLFLSDVPAELSAAAEAELQVCQLVRGAGIERQETYPAVASFADLLIKPA</sequence>
<proteinExistence type="inferred from homology"/>
<dbReference type="EC" id="3.1.3.77" evidence="1"/>
<dbReference type="EMBL" id="CP000155">
    <property type="protein sequence ID" value="ABC28684.1"/>
    <property type="molecule type" value="Genomic_DNA"/>
</dbReference>
<dbReference type="RefSeq" id="WP_011395756.1">
    <property type="nucleotide sequence ID" value="NC_007645.1"/>
</dbReference>
<dbReference type="SMR" id="Q2SKZ0"/>
<dbReference type="STRING" id="349521.HCH_01846"/>
<dbReference type="KEGG" id="hch:HCH_01846"/>
<dbReference type="eggNOG" id="COG4229">
    <property type="taxonomic scope" value="Bacteria"/>
</dbReference>
<dbReference type="HOGENOM" id="CLU_023273_0_0_6"/>
<dbReference type="OrthoDB" id="9797416at2"/>
<dbReference type="UniPathway" id="UPA00904">
    <property type="reaction ID" value="UER00876"/>
</dbReference>
<dbReference type="UniPathway" id="UPA00904">
    <property type="reaction ID" value="UER00877"/>
</dbReference>
<dbReference type="Proteomes" id="UP000000238">
    <property type="component" value="Chromosome"/>
</dbReference>
<dbReference type="GO" id="GO:0043715">
    <property type="term" value="F:2,3-diketo-5-methylthiopentyl-1-phosphate enolase activity"/>
    <property type="evidence" value="ECO:0007669"/>
    <property type="project" value="UniProtKB-UniRule"/>
</dbReference>
<dbReference type="GO" id="GO:0043716">
    <property type="term" value="F:2-hydroxy-3-keto-5-methylthiopentenyl-1-phosphate phosphatase activity"/>
    <property type="evidence" value="ECO:0007669"/>
    <property type="project" value="UniProtKB-UniRule"/>
</dbReference>
<dbReference type="GO" id="GO:0043874">
    <property type="term" value="F:acireductone synthase activity"/>
    <property type="evidence" value="ECO:0007669"/>
    <property type="project" value="UniProtKB-EC"/>
</dbReference>
<dbReference type="GO" id="GO:0000287">
    <property type="term" value="F:magnesium ion binding"/>
    <property type="evidence" value="ECO:0007669"/>
    <property type="project" value="UniProtKB-UniRule"/>
</dbReference>
<dbReference type="GO" id="GO:0019509">
    <property type="term" value="P:L-methionine salvage from methylthioadenosine"/>
    <property type="evidence" value="ECO:0007669"/>
    <property type="project" value="UniProtKB-UniRule"/>
</dbReference>
<dbReference type="CDD" id="cd01629">
    <property type="entry name" value="HAD_EP"/>
    <property type="match status" value="1"/>
</dbReference>
<dbReference type="Gene3D" id="1.10.720.60">
    <property type="match status" value="1"/>
</dbReference>
<dbReference type="Gene3D" id="3.40.50.1000">
    <property type="entry name" value="HAD superfamily/HAD-like"/>
    <property type="match status" value="1"/>
</dbReference>
<dbReference type="HAMAP" id="MF_01681">
    <property type="entry name" value="Salvage_MtnC"/>
    <property type="match status" value="1"/>
</dbReference>
<dbReference type="InterPro" id="IPR023943">
    <property type="entry name" value="Enolase-ppase_E1"/>
</dbReference>
<dbReference type="InterPro" id="IPR036412">
    <property type="entry name" value="HAD-like_sf"/>
</dbReference>
<dbReference type="InterPro" id="IPR023214">
    <property type="entry name" value="HAD_sf"/>
</dbReference>
<dbReference type="NCBIfam" id="TIGR01691">
    <property type="entry name" value="enolase-ppase"/>
    <property type="match status" value="1"/>
</dbReference>
<dbReference type="PANTHER" id="PTHR20371">
    <property type="entry name" value="ENOLASE-PHOSPHATASE E1"/>
    <property type="match status" value="1"/>
</dbReference>
<dbReference type="PANTHER" id="PTHR20371:SF1">
    <property type="entry name" value="ENOLASE-PHOSPHATASE E1"/>
    <property type="match status" value="1"/>
</dbReference>
<dbReference type="Pfam" id="PF00702">
    <property type="entry name" value="Hydrolase"/>
    <property type="match status" value="1"/>
</dbReference>
<dbReference type="SFLD" id="SFLDG01133">
    <property type="entry name" value="C1.5.4:_Enolase-phosphatase_Li"/>
    <property type="match status" value="1"/>
</dbReference>
<dbReference type="SFLD" id="SFLDF00044">
    <property type="entry name" value="enolase-phosphatase"/>
    <property type="match status" value="1"/>
</dbReference>
<dbReference type="SUPFAM" id="SSF56784">
    <property type="entry name" value="HAD-like"/>
    <property type="match status" value="1"/>
</dbReference>
<reference key="1">
    <citation type="journal article" date="2005" name="Nucleic Acids Res.">
        <title>Genomic blueprint of Hahella chejuensis, a marine microbe producing an algicidal agent.</title>
        <authorList>
            <person name="Jeong H."/>
            <person name="Yim J.H."/>
            <person name="Lee C."/>
            <person name="Choi S.-H."/>
            <person name="Park Y.K."/>
            <person name="Yoon S.H."/>
            <person name="Hur C.-G."/>
            <person name="Kang H.-Y."/>
            <person name="Kim D."/>
            <person name="Lee H.H."/>
            <person name="Park K.H."/>
            <person name="Park S.-H."/>
            <person name="Park H.-S."/>
            <person name="Lee H.K."/>
            <person name="Oh T.K."/>
            <person name="Kim J.F."/>
        </authorList>
    </citation>
    <scope>NUCLEOTIDE SEQUENCE [LARGE SCALE GENOMIC DNA]</scope>
    <source>
        <strain>KCTC 2396</strain>
    </source>
</reference>
<comment type="function">
    <text evidence="1">Bifunctional enzyme that catalyzes the enolization of 2,3-diketo-5-methylthiopentyl-1-phosphate (DK-MTP-1-P) into the intermediate 2-hydroxy-3-keto-5-methylthiopentenyl-1-phosphate (HK-MTPenyl-1-P), which is then dephosphorylated to form the acireductone 1,2-dihydroxy-3-keto-5-methylthiopentene (DHK-MTPene).</text>
</comment>
<comment type="catalytic activity">
    <reaction evidence="1">
        <text>5-methylsulfanyl-2,3-dioxopentyl phosphate + H2O = 1,2-dihydroxy-5-(methylsulfanyl)pent-1-en-3-one + phosphate</text>
        <dbReference type="Rhea" id="RHEA:21700"/>
        <dbReference type="ChEBI" id="CHEBI:15377"/>
        <dbReference type="ChEBI" id="CHEBI:43474"/>
        <dbReference type="ChEBI" id="CHEBI:49252"/>
        <dbReference type="ChEBI" id="CHEBI:58828"/>
        <dbReference type="EC" id="3.1.3.77"/>
    </reaction>
</comment>
<comment type="cofactor">
    <cofactor evidence="1">
        <name>Mg(2+)</name>
        <dbReference type="ChEBI" id="CHEBI:18420"/>
    </cofactor>
    <text evidence="1">Binds 1 Mg(2+) ion per subunit.</text>
</comment>
<comment type="pathway">
    <text evidence="1">Amino-acid biosynthesis; L-methionine biosynthesis via salvage pathway; L-methionine from S-methyl-5-thio-alpha-D-ribose 1-phosphate: step 3/6.</text>
</comment>
<comment type="pathway">
    <text evidence="1">Amino-acid biosynthesis; L-methionine biosynthesis via salvage pathway; L-methionine from S-methyl-5-thio-alpha-D-ribose 1-phosphate: step 4/6.</text>
</comment>
<comment type="subunit">
    <text evidence="1">Monomer.</text>
</comment>
<comment type="similarity">
    <text evidence="1">Belongs to the HAD-like hydrolase superfamily. MasA/MtnC family.</text>
</comment>
<organism>
    <name type="scientific">Hahella chejuensis (strain KCTC 2396)</name>
    <dbReference type="NCBI Taxonomy" id="349521"/>
    <lineage>
        <taxon>Bacteria</taxon>
        <taxon>Pseudomonadati</taxon>
        <taxon>Pseudomonadota</taxon>
        <taxon>Gammaproteobacteria</taxon>
        <taxon>Oceanospirillales</taxon>
        <taxon>Hahellaceae</taxon>
        <taxon>Hahella</taxon>
    </lineage>
</organism>
<protein>
    <recommendedName>
        <fullName evidence="1">Enolase-phosphatase E1</fullName>
        <ecNumber evidence="1">3.1.3.77</ecNumber>
    </recommendedName>
    <alternativeName>
        <fullName evidence="1">2,3-diketo-5-methylthio-1-phosphopentane phosphatase</fullName>
    </alternativeName>
</protein>
<evidence type="ECO:0000255" key="1">
    <source>
        <dbReference type="HAMAP-Rule" id="MF_01681"/>
    </source>
</evidence>